<feature type="chain" id="PRO_0000315099" description="UDP-N-acetylglucosamine--N-acetylmuramyl-(pentapeptide) pyrophosphoryl-undecaprenol N-acetylglucosamine transferase">
    <location>
        <begin position="1"/>
        <end position="357"/>
    </location>
</feature>
<feature type="binding site" evidence="1">
    <location>
        <begin position="14"/>
        <end position="16"/>
    </location>
    <ligand>
        <name>UDP-N-acetyl-alpha-D-glucosamine</name>
        <dbReference type="ChEBI" id="CHEBI:57705"/>
    </ligand>
</feature>
<feature type="binding site" evidence="1">
    <location>
        <position position="126"/>
    </location>
    <ligand>
        <name>UDP-N-acetyl-alpha-D-glucosamine</name>
        <dbReference type="ChEBI" id="CHEBI:57705"/>
    </ligand>
</feature>
<feature type="binding site" evidence="1">
    <location>
        <position position="162"/>
    </location>
    <ligand>
        <name>UDP-N-acetyl-alpha-D-glucosamine</name>
        <dbReference type="ChEBI" id="CHEBI:57705"/>
    </ligand>
</feature>
<feature type="binding site" evidence="1">
    <location>
        <position position="190"/>
    </location>
    <ligand>
        <name>UDP-N-acetyl-alpha-D-glucosamine</name>
        <dbReference type="ChEBI" id="CHEBI:57705"/>
    </ligand>
</feature>
<feature type="binding site" evidence="1">
    <location>
        <position position="246"/>
    </location>
    <ligand>
        <name>UDP-N-acetyl-alpha-D-glucosamine</name>
        <dbReference type="ChEBI" id="CHEBI:57705"/>
    </ligand>
</feature>
<feature type="binding site" evidence="1">
    <location>
        <begin position="265"/>
        <end position="270"/>
    </location>
    <ligand>
        <name>UDP-N-acetyl-alpha-D-glucosamine</name>
        <dbReference type="ChEBI" id="CHEBI:57705"/>
    </ligand>
</feature>
<feature type="binding site" evidence="1">
    <location>
        <position position="290"/>
    </location>
    <ligand>
        <name>UDP-N-acetyl-alpha-D-glucosamine</name>
        <dbReference type="ChEBI" id="CHEBI:57705"/>
    </ligand>
</feature>
<organism>
    <name type="scientific">Histophilus somni (strain 129Pt)</name>
    <name type="common">Haemophilus somnus</name>
    <dbReference type="NCBI Taxonomy" id="205914"/>
    <lineage>
        <taxon>Bacteria</taxon>
        <taxon>Pseudomonadati</taxon>
        <taxon>Pseudomonadota</taxon>
        <taxon>Gammaproteobacteria</taxon>
        <taxon>Pasteurellales</taxon>
        <taxon>Pasteurellaceae</taxon>
        <taxon>Histophilus</taxon>
    </lineage>
</organism>
<reference key="1">
    <citation type="journal article" date="2007" name="J. Bacteriol.">
        <title>Complete genome sequence of Haemophilus somnus (Histophilus somni) strain 129Pt and comparison to Haemophilus ducreyi 35000HP and Haemophilus influenzae Rd.</title>
        <authorList>
            <person name="Challacombe J.F."/>
            <person name="Duncan A.J."/>
            <person name="Brettin T.S."/>
            <person name="Bruce D."/>
            <person name="Chertkov O."/>
            <person name="Detter J.C."/>
            <person name="Han C.S."/>
            <person name="Misra M."/>
            <person name="Richardson P."/>
            <person name="Tapia R."/>
            <person name="Thayer N."/>
            <person name="Xie G."/>
            <person name="Inzana T.J."/>
        </authorList>
    </citation>
    <scope>NUCLEOTIDE SEQUENCE [LARGE SCALE GENOMIC DNA]</scope>
    <source>
        <strain>129Pt</strain>
    </source>
</reference>
<dbReference type="EC" id="2.4.1.227" evidence="1"/>
<dbReference type="EMBL" id="CP000436">
    <property type="protein sequence ID" value="ABI24636.1"/>
    <property type="molecule type" value="Genomic_DNA"/>
</dbReference>
<dbReference type="SMR" id="Q0I1D3"/>
<dbReference type="CAZy" id="GT28">
    <property type="family name" value="Glycosyltransferase Family 28"/>
</dbReference>
<dbReference type="KEGG" id="hso:HS_0358"/>
<dbReference type="eggNOG" id="COG0707">
    <property type="taxonomic scope" value="Bacteria"/>
</dbReference>
<dbReference type="HOGENOM" id="CLU_037404_2_0_6"/>
<dbReference type="UniPathway" id="UPA00219"/>
<dbReference type="GO" id="GO:0005886">
    <property type="term" value="C:plasma membrane"/>
    <property type="evidence" value="ECO:0007669"/>
    <property type="project" value="UniProtKB-SubCell"/>
</dbReference>
<dbReference type="GO" id="GO:0051991">
    <property type="term" value="F:UDP-N-acetyl-D-glucosamine:N-acetylmuramoyl-L-alanyl-D-glutamyl-meso-2,6-diaminopimelyl-D-alanyl-D-alanine-diphosphoundecaprenol 4-beta-N-acetylglucosaminlytransferase activity"/>
    <property type="evidence" value="ECO:0007669"/>
    <property type="project" value="RHEA"/>
</dbReference>
<dbReference type="GO" id="GO:0050511">
    <property type="term" value="F:undecaprenyldiphospho-muramoylpentapeptide beta-N-acetylglucosaminyltransferase activity"/>
    <property type="evidence" value="ECO:0007669"/>
    <property type="project" value="UniProtKB-UniRule"/>
</dbReference>
<dbReference type="GO" id="GO:0005975">
    <property type="term" value="P:carbohydrate metabolic process"/>
    <property type="evidence" value="ECO:0007669"/>
    <property type="project" value="InterPro"/>
</dbReference>
<dbReference type="GO" id="GO:0051301">
    <property type="term" value="P:cell division"/>
    <property type="evidence" value="ECO:0007669"/>
    <property type="project" value="UniProtKB-KW"/>
</dbReference>
<dbReference type="GO" id="GO:0071555">
    <property type="term" value="P:cell wall organization"/>
    <property type="evidence" value="ECO:0007669"/>
    <property type="project" value="UniProtKB-KW"/>
</dbReference>
<dbReference type="GO" id="GO:0030259">
    <property type="term" value="P:lipid glycosylation"/>
    <property type="evidence" value="ECO:0007669"/>
    <property type="project" value="UniProtKB-UniRule"/>
</dbReference>
<dbReference type="GO" id="GO:0009252">
    <property type="term" value="P:peptidoglycan biosynthetic process"/>
    <property type="evidence" value="ECO:0007669"/>
    <property type="project" value="UniProtKB-UniRule"/>
</dbReference>
<dbReference type="GO" id="GO:0008360">
    <property type="term" value="P:regulation of cell shape"/>
    <property type="evidence" value="ECO:0007669"/>
    <property type="project" value="UniProtKB-KW"/>
</dbReference>
<dbReference type="CDD" id="cd03785">
    <property type="entry name" value="GT28_MurG"/>
    <property type="match status" value="1"/>
</dbReference>
<dbReference type="Gene3D" id="3.40.50.2000">
    <property type="entry name" value="Glycogen Phosphorylase B"/>
    <property type="match status" value="2"/>
</dbReference>
<dbReference type="HAMAP" id="MF_00033">
    <property type="entry name" value="MurG"/>
    <property type="match status" value="1"/>
</dbReference>
<dbReference type="InterPro" id="IPR006009">
    <property type="entry name" value="GlcNAc_MurG"/>
</dbReference>
<dbReference type="InterPro" id="IPR007235">
    <property type="entry name" value="Glyco_trans_28_C"/>
</dbReference>
<dbReference type="InterPro" id="IPR004276">
    <property type="entry name" value="GlycoTrans_28_N"/>
</dbReference>
<dbReference type="NCBIfam" id="TIGR01133">
    <property type="entry name" value="murG"/>
    <property type="match status" value="1"/>
</dbReference>
<dbReference type="PANTHER" id="PTHR21015:SF22">
    <property type="entry name" value="GLYCOSYLTRANSFERASE"/>
    <property type="match status" value="1"/>
</dbReference>
<dbReference type="PANTHER" id="PTHR21015">
    <property type="entry name" value="UDP-N-ACETYLGLUCOSAMINE--N-ACETYLMURAMYL-(PENTAPEPTIDE) PYROPHOSPHORYL-UNDECAPRENOL N-ACETYLGLUCOSAMINE TRANSFERASE 1"/>
    <property type="match status" value="1"/>
</dbReference>
<dbReference type="Pfam" id="PF04101">
    <property type="entry name" value="Glyco_tran_28_C"/>
    <property type="match status" value="1"/>
</dbReference>
<dbReference type="Pfam" id="PF03033">
    <property type="entry name" value="Glyco_transf_28"/>
    <property type="match status" value="1"/>
</dbReference>
<dbReference type="SUPFAM" id="SSF53756">
    <property type="entry name" value="UDP-Glycosyltransferase/glycogen phosphorylase"/>
    <property type="match status" value="1"/>
</dbReference>
<comment type="function">
    <text evidence="1">Cell wall formation. Catalyzes the transfer of a GlcNAc subunit on undecaprenyl-pyrophosphoryl-MurNAc-pentapeptide (lipid intermediate I) to form undecaprenyl-pyrophosphoryl-MurNAc-(pentapeptide)GlcNAc (lipid intermediate II).</text>
</comment>
<comment type="catalytic activity">
    <reaction evidence="1">
        <text>di-trans,octa-cis-undecaprenyl diphospho-N-acetyl-alpha-D-muramoyl-L-alanyl-D-glutamyl-meso-2,6-diaminopimeloyl-D-alanyl-D-alanine + UDP-N-acetyl-alpha-D-glucosamine = di-trans,octa-cis-undecaprenyl diphospho-[N-acetyl-alpha-D-glucosaminyl-(1-&gt;4)]-N-acetyl-alpha-D-muramoyl-L-alanyl-D-glutamyl-meso-2,6-diaminopimeloyl-D-alanyl-D-alanine + UDP + H(+)</text>
        <dbReference type="Rhea" id="RHEA:31227"/>
        <dbReference type="ChEBI" id="CHEBI:15378"/>
        <dbReference type="ChEBI" id="CHEBI:57705"/>
        <dbReference type="ChEBI" id="CHEBI:58223"/>
        <dbReference type="ChEBI" id="CHEBI:61387"/>
        <dbReference type="ChEBI" id="CHEBI:61388"/>
        <dbReference type="EC" id="2.4.1.227"/>
    </reaction>
</comment>
<comment type="pathway">
    <text evidence="1">Cell wall biogenesis; peptidoglycan biosynthesis.</text>
</comment>
<comment type="subcellular location">
    <subcellularLocation>
        <location evidence="1">Cell inner membrane</location>
        <topology evidence="1">Peripheral membrane protein</topology>
        <orientation evidence="1">Cytoplasmic side</orientation>
    </subcellularLocation>
</comment>
<comment type="similarity">
    <text evidence="1">Belongs to the glycosyltransferase 28 family. MurG subfamily.</text>
</comment>
<keyword id="KW-0131">Cell cycle</keyword>
<keyword id="KW-0132">Cell division</keyword>
<keyword id="KW-0997">Cell inner membrane</keyword>
<keyword id="KW-1003">Cell membrane</keyword>
<keyword id="KW-0133">Cell shape</keyword>
<keyword id="KW-0961">Cell wall biogenesis/degradation</keyword>
<keyword id="KW-0328">Glycosyltransferase</keyword>
<keyword id="KW-0472">Membrane</keyword>
<keyword id="KW-0573">Peptidoglycan synthesis</keyword>
<keyword id="KW-0808">Transferase</keyword>
<sequence>MSKRKKLLVMAGGTGGHVFPAIAVAQYLQKQDWDICWLGTRDRMEAKLVPKHGIPIEFIQISGLRGKGLITLLKAPFVILRAVLQARKIIKKYQPDVVLGMGGYVSGPGGVAAKLCNIPVVVHEQNAVLGLTNSLLAKIATRVLQAFPNTFPNAEVVGNPVREAFFSVPMPQERFNTTCETLKVLVVGGSQGAHILNTILPEVLAQLPNRLEIVHQVGSGSVENVTALYHDKVNLTQESVQITEFIDDIAQAYAWADIVICRSGALTVCELAAVGTPAIFVPFQHKDKQQYLNAKYLADVGAAYIVEQHELDAEKIAQLLKNVDKEKLLEMAEKAKNMSTPLSTQRVAEVIMDTVKT</sequence>
<protein>
    <recommendedName>
        <fullName evidence="1">UDP-N-acetylglucosamine--N-acetylmuramyl-(pentapeptide) pyrophosphoryl-undecaprenol N-acetylglucosamine transferase</fullName>
        <ecNumber evidence="1">2.4.1.227</ecNumber>
    </recommendedName>
    <alternativeName>
        <fullName evidence="1">Undecaprenyl-PP-MurNAc-pentapeptide-UDPGlcNAc GlcNAc transferase</fullName>
    </alternativeName>
</protein>
<name>MURG_HISS1</name>
<accession>Q0I1D3</accession>
<gene>
    <name evidence="1" type="primary">murG</name>
    <name type="ordered locus">HS_0358</name>
</gene>
<evidence type="ECO:0000255" key="1">
    <source>
        <dbReference type="HAMAP-Rule" id="MF_00033"/>
    </source>
</evidence>
<proteinExistence type="inferred from homology"/>